<keyword id="KW-0963">Cytoplasm</keyword>
<keyword id="KW-0227">DNA damage</keyword>
<keyword id="KW-0233">DNA recombination</keyword>
<keyword id="KW-0234">DNA repair</keyword>
<keyword id="KW-0238">DNA-binding</keyword>
<gene>
    <name evidence="1" type="primary">ruvA</name>
    <name type="ordered locus">BAPKO_0022</name>
    <name type="ordered locus">BafPKo_0023</name>
</gene>
<protein>
    <recommendedName>
        <fullName evidence="1">Holliday junction branch migration complex subunit RuvA</fullName>
    </recommendedName>
</protein>
<proteinExistence type="inferred from homology"/>
<name>RUVA_BORAP</name>
<feature type="chain" id="PRO_1000002403" description="Holliday junction branch migration complex subunit RuvA">
    <location>
        <begin position="1"/>
        <end position="196"/>
    </location>
</feature>
<feature type="region of interest" description="Domain I" evidence="1">
    <location>
        <begin position="1"/>
        <end position="63"/>
    </location>
</feature>
<feature type="region of interest" description="Domain II" evidence="1">
    <location>
        <begin position="64"/>
        <end position="139"/>
    </location>
</feature>
<feature type="region of interest" description="Domain III" evidence="1">
    <location>
        <begin position="139"/>
        <end position="196"/>
    </location>
</feature>
<feature type="region of interest" description="Flexible linker" evidence="1">
    <location>
        <position position="139"/>
    </location>
</feature>
<reference key="1">
    <citation type="journal article" date="2006" name="BMC Genomics">
        <title>Comparative genome analysis: selection pressure on the Borrelia vls cassettes is essential for infectivity.</title>
        <authorList>
            <person name="Gloeckner G."/>
            <person name="Schulte-Spechtel U."/>
            <person name="Schilhabel M."/>
            <person name="Felder M."/>
            <person name="Suehnel J."/>
            <person name="Wilske B."/>
            <person name="Platzer M."/>
        </authorList>
    </citation>
    <scope>NUCLEOTIDE SEQUENCE [LARGE SCALE GENOMIC DNA]</scope>
    <source>
        <strain>PKo</strain>
    </source>
</reference>
<reference key="2">
    <citation type="journal article" date="2011" name="J. Bacteriol.">
        <title>Whole-genome sequences of two Borrelia afzelii and two Borrelia garinii Lyme disease agent isolates.</title>
        <authorList>
            <person name="Casjens S.R."/>
            <person name="Mongodin E.F."/>
            <person name="Qiu W.G."/>
            <person name="Dunn J.J."/>
            <person name="Luft B.J."/>
            <person name="Fraser-Liggett C.M."/>
            <person name="Schutzer S.E."/>
        </authorList>
    </citation>
    <scope>NUCLEOTIDE SEQUENCE [LARGE SCALE GENOMIC DNA]</scope>
    <source>
        <strain>PKo</strain>
    </source>
</reference>
<comment type="function">
    <text evidence="1">The RuvA-RuvB-RuvC complex processes Holliday junction (HJ) DNA during genetic recombination and DNA repair, while the RuvA-RuvB complex plays an important role in the rescue of blocked DNA replication forks via replication fork reversal (RFR). RuvA specifically binds to HJ cruciform DNA, conferring on it an open structure. The RuvB hexamer acts as an ATP-dependent pump, pulling dsDNA into and through the RuvAB complex. HJ branch migration allows RuvC to scan DNA until it finds its consensus sequence, where it cleaves and resolves the cruciform DNA.</text>
</comment>
<comment type="subunit">
    <text evidence="1">Homotetramer. Forms an RuvA(8)-RuvB(12)-Holliday junction (HJ) complex. HJ DNA is sandwiched between 2 RuvA tetramers; dsDNA enters through RuvA and exits via RuvB. An RuvB hexamer assembles on each DNA strand where it exits the tetramer. Each RuvB hexamer is contacted by two RuvA subunits (via domain III) on 2 adjacent RuvB subunits; this complex drives branch migration. In the full resolvosome a probable DNA-RuvA(4)-RuvB(12)-RuvC(2) complex forms which resolves the HJ.</text>
</comment>
<comment type="subcellular location">
    <subcellularLocation>
        <location evidence="1">Cytoplasm</location>
    </subcellularLocation>
</comment>
<comment type="domain">
    <text evidence="1">Has three domains with a flexible linker between the domains II and III and assumes an 'L' shape. Domain III is highly mobile and contacts RuvB.</text>
</comment>
<comment type="similarity">
    <text evidence="1">Belongs to the RuvA family.</text>
</comment>
<evidence type="ECO:0000255" key="1">
    <source>
        <dbReference type="HAMAP-Rule" id="MF_00031"/>
    </source>
</evidence>
<organism>
    <name type="scientific">Borreliella afzelii (strain PKo)</name>
    <name type="common">Borrelia afzelii</name>
    <dbReference type="NCBI Taxonomy" id="390236"/>
    <lineage>
        <taxon>Bacteria</taxon>
        <taxon>Pseudomonadati</taxon>
        <taxon>Spirochaetota</taxon>
        <taxon>Spirochaetia</taxon>
        <taxon>Spirochaetales</taxon>
        <taxon>Borreliaceae</taxon>
        <taxon>Borreliella</taxon>
    </lineage>
</organism>
<accession>Q0SPE1</accession>
<accession>G0IQ53</accession>
<sequence>MINKIYGKVIEKKESSLVLMTAVFEFELLVSAFCLANFKLLDKVELFTYLYTKENELKLFGFLNSDERETFKSLIGVSGIGPRAALRVLSNIRYNEFKDAIDREDIELIAKIKGIGKKMAGKMFLHLQGKLLINNELESSLFRFKELEESIVSMGFDRKIVNSKLKEAFNLVEFSNLKDSEKEQFLFKEVLKRMSN</sequence>
<dbReference type="EMBL" id="CP000395">
    <property type="protein sequence ID" value="ABH01287.1"/>
    <property type="molecule type" value="Genomic_DNA"/>
</dbReference>
<dbReference type="EMBL" id="CP002933">
    <property type="protein sequence ID" value="AEL69257.1"/>
    <property type="molecule type" value="Genomic_DNA"/>
</dbReference>
<dbReference type="RefSeq" id="WP_004790661.1">
    <property type="nucleotide sequence ID" value="NZ_CP160066.1"/>
</dbReference>
<dbReference type="SMR" id="Q0SPE1"/>
<dbReference type="STRING" id="29518.BLA32_04165"/>
<dbReference type="GeneID" id="77264867"/>
<dbReference type="KEGG" id="baf:BAPKO_0022"/>
<dbReference type="KEGG" id="bafz:BafPKo_0023"/>
<dbReference type="PATRIC" id="fig|390236.22.peg.23"/>
<dbReference type="eggNOG" id="COG0632">
    <property type="taxonomic scope" value="Bacteria"/>
</dbReference>
<dbReference type="HOGENOM" id="CLU_087936_2_0_12"/>
<dbReference type="OrthoDB" id="5293449at2"/>
<dbReference type="Proteomes" id="UP000005216">
    <property type="component" value="Chromosome"/>
</dbReference>
<dbReference type="GO" id="GO:0005737">
    <property type="term" value="C:cytoplasm"/>
    <property type="evidence" value="ECO:0007669"/>
    <property type="project" value="UniProtKB-SubCell"/>
</dbReference>
<dbReference type="GO" id="GO:0048476">
    <property type="term" value="C:Holliday junction resolvase complex"/>
    <property type="evidence" value="ECO:0007669"/>
    <property type="project" value="UniProtKB-UniRule"/>
</dbReference>
<dbReference type="GO" id="GO:0005524">
    <property type="term" value="F:ATP binding"/>
    <property type="evidence" value="ECO:0007669"/>
    <property type="project" value="InterPro"/>
</dbReference>
<dbReference type="GO" id="GO:0000400">
    <property type="term" value="F:four-way junction DNA binding"/>
    <property type="evidence" value="ECO:0007669"/>
    <property type="project" value="UniProtKB-UniRule"/>
</dbReference>
<dbReference type="GO" id="GO:0009378">
    <property type="term" value="F:four-way junction helicase activity"/>
    <property type="evidence" value="ECO:0007669"/>
    <property type="project" value="InterPro"/>
</dbReference>
<dbReference type="GO" id="GO:0006310">
    <property type="term" value="P:DNA recombination"/>
    <property type="evidence" value="ECO:0007669"/>
    <property type="project" value="UniProtKB-UniRule"/>
</dbReference>
<dbReference type="GO" id="GO:0006281">
    <property type="term" value="P:DNA repair"/>
    <property type="evidence" value="ECO:0007669"/>
    <property type="project" value="UniProtKB-UniRule"/>
</dbReference>
<dbReference type="Gene3D" id="1.10.150.20">
    <property type="entry name" value="5' to 3' exonuclease, C-terminal subdomain"/>
    <property type="match status" value="1"/>
</dbReference>
<dbReference type="Gene3D" id="2.40.50.140">
    <property type="entry name" value="Nucleic acid-binding proteins"/>
    <property type="match status" value="1"/>
</dbReference>
<dbReference type="HAMAP" id="MF_00031">
    <property type="entry name" value="DNA_HJ_migration_RuvA"/>
    <property type="match status" value="1"/>
</dbReference>
<dbReference type="InterPro" id="IPR013849">
    <property type="entry name" value="DNA_helicase_Holl-junc_RuvA_I"/>
</dbReference>
<dbReference type="InterPro" id="IPR003583">
    <property type="entry name" value="Hlx-hairpin-Hlx_DNA-bd_motif"/>
</dbReference>
<dbReference type="InterPro" id="IPR012340">
    <property type="entry name" value="NA-bd_OB-fold"/>
</dbReference>
<dbReference type="InterPro" id="IPR000085">
    <property type="entry name" value="RuvA"/>
</dbReference>
<dbReference type="InterPro" id="IPR010994">
    <property type="entry name" value="RuvA_2-like"/>
</dbReference>
<dbReference type="NCBIfam" id="TIGR00084">
    <property type="entry name" value="ruvA"/>
    <property type="match status" value="1"/>
</dbReference>
<dbReference type="Pfam" id="PF14520">
    <property type="entry name" value="HHH_5"/>
    <property type="match status" value="1"/>
</dbReference>
<dbReference type="Pfam" id="PF01330">
    <property type="entry name" value="RuvA_N"/>
    <property type="match status" value="1"/>
</dbReference>
<dbReference type="SMART" id="SM00278">
    <property type="entry name" value="HhH1"/>
    <property type="match status" value="2"/>
</dbReference>
<dbReference type="SUPFAM" id="SSF50249">
    <property type="entry name" value="Nucleic acid-binding proteins"/>
    <property type="match status" value="1"/>
</dbReference>
<dbReference type="SUPFAM" id="SSF47781">
    <property type="entry name" value="RuvA domain 2-like"/>
    <property type="match status" value="1"/>
</dbReference>